<reference key="1">
    <citation type="journal article" date="2006" name="Mol. Phylogenet. Evol.">
        <title>Mitochondrial data support an odd-nosed colobine clade.</title>
        <authorList>
            <person name="Sterner K.N."/>
            <person name="Raaum R.L."/>
            <person name="Zhang Y.-P."/>
            <person name="Stewart C.-B.R."/>
            <person name="Disotell T.R."/>
        </authorList>
    </citation>
    <scope>NUCLEOTIDE SEQUENCE [GENOMIC DNA]</scope>
</reference>
<sequence>MPIIYMNIMLAFTISLLGMLTYRSHLMSSLLCLEGMMLSLFIMSTLMALNMHFPLANIVPIALLVFAACEAAVGLSLLISISNTYGLDHIHNLSLLQC</sequence>
<feature type="chain" id="PRO_0000275108" description="NADH-ubiquinone oxidoreductase chain 4L">
    <location>
        <begin position="1"/>
        <end position="98"/>
    </location>
</feature>
<feature type="transmembrane region" description="Helical" evidence="3">
    <location>
        <begin position="1"/>
        <end position="21"/>
    </location>
</feature>
<feature type="transmembrane region" description="Helical" evidence="3">
    <location>
        <begin position="29"/>
        <end position="49"/>
    </location>
</feature>
<feature type="transmembrane region" description="Helical" evidence="3">
    <location>
        <begin position="58"/>
        <end position="78"/>
    </location>
</feature>
<geneLocation type="mitochondrion"/>
<proteinExistence type="inferred from homology"/>
<evidence type="ECO:0000250" key="1">
    <source>
        <dbReference type="UniProtKB" id="P03901"/>
    </source>
</evidence>
<evidence type="ECO:0000250" key="2">
    <source>
        <dbReference type="UniProtKB" id="P03902"/>
    </source>
</evidence>
<evidence type="ECO:0000255" key="3"/>
<evidence type="ECO:0000305" key="4"/>
<protein>
    <recommendedName>
        <fullName>NADH-ubiquinone oxidoreductase chain 4L</fullName>
        <ecNumber>7.1.1.2</ecNumber>
    </recommendedName>
    <alternativeName>
        <fullName>NADH dehydrogenase subunit 4L</fullName>
    </alternativeName>
</protein>
<keyword id="KW-0249">Electron transport</keyword>
<keyword id="KW-0472">Membrane</keyword>
<keyword id="KW-0496">Mitochondrion</keyword>
<keyword id="KW-0999">Mitochondrion inner membrane</keyword>
<keyword id="KW-0520">NAD</keyword>
<keyword id="KW-0679">Respiratory chain</keyword>
<keyword id="KW-1278">Translocase</keyword>
<keyword id="KW-0812">Transmembrane</keyword>
<keyword id="KW-1133">Transmembrane helix</keyword>
<keyword id="KW-0813">Transport</keyword>
<keyword id="KW-0830">Ubiquinone</keyword>
<name>NU4LM_PREME</name>
<comment type="function">
    <text evidence="1">Core subunit of the mitochondrial membrane respiratory chain NADH dehydrogenase (Complex I) which catalyzes electron transfer from NADH through the respiratory chain, using ubiquinone as an electron acceptor. Part of the enzyme membrane arm which is embedded in the lipid bilayer and involved in proton translocation.</text>
</comment>
<comment type="catalytic activity">
    <reaction evidence="1">
        <text>a ubiquinone + NADH + 5 H(+)(in) = a ubiquinol + NAD(+) + 4 H(+)(out)</text>
        <dbReference type="Rhea" id="RHEA:29091"/>
        <dbReference type="Rhea" id="RHEA-COMP:9565"/>
        <dbReference type="Rhea" id="RHEA-COMP:9566"/>
        <dbReference type="ChEBI" id="CHEBI:15378"/>
        <dbReference type="ChEBI" id="CHEBI:16389"/>
        <dbReference type="ChEBI" id="CHEBI:17976"/>
        <dbReference type="ChEBI" id="CHEBI:57540"/>
        <dbReference type="ChEBI" id="CHEBI:57945"/>
        <dbReference type="EC" id="7.1.1.2"/>
    </reaction>
    <physiologicalReaction direction="left-to-right" evidence="1">
        <dbReference type="Rhea" id="RHEA:29092"/>
    </physiologicalReaction>
</comment>
<comment type="subunit">
    <text evidence="2">Core subunit of respiratory chain NADH dehydrogenase (Complex I) which is composed of 45 different subunits.</text>
</comment>
<comment type="subcellular location">
    <subcellularLocation>
        <location evidence="2">Mitochondrion inner membrane</location>
        <topology evidence="3">Multi-pass membrane protein</topology>
    </subcellularLocation>
</comment>
<comment type="similarity">
    <text evidence="4">Belongs to the complex I subunit 4L family.</text>
</comment>
<gene>
    <name type="primary">MT-ND4L</name>
    <name type="synonym">MTND4L</name>
    <name type="synonym">NADH4L</name>
    <name type="synonym">ND4L</name>
</gene>
<dbReference type="EC" id="7.1.1.2"/>
<dbReference type="EMBL" id="DQ355299">
    <property type="protein sequence ID" value="ABD39274.1"/>
    <property type="molecule type" value="Genomic_DNA"/>
</dbReference>
<dbReference type="RefSeq" id="YP_659468.1">
    <property type="nucleotide sequence ID" value="NC_008217.1"/>
</dbReference>
<dbReference type="SMR" id="Q15GP7"/>
<dbReference type="GeneID" id="4171549"/>
<dbReference type="CTD" id="4539"/>
<dbReference type="GO" id="GO:0005743">
    <property type="term" value="C:mitochondrial inner membrane"/>
    <property type="evidence" value="ECO:0000250"/>
    <property type="project" value="UniProtKB"/>
</dbReference>
<dbReference type="GO" id="GO:0045271">
    <property type="term" value="C:respiratory chain complex I"/>
    <property type="evidence" value="ECO:0000250"/>
    <property type="project" value="UniProtKB"/>
</dbReference>
<dbReference type="GO" id="GO:0008137">
    <property type="term" value="F:NADH dehydrogenase (ubiquinone) activity"/>
    <property type="evidence" value="ECO:0000250"/>
    <property type="project" value="UniProtKB"/>
</dbReference>
<dbReference type="GO" id="GO:0042773">
    <property type="term" value="P:ATP synthesis coupled electron transport"/>
    <property type="evidence" value="ECO:0007669"/>
    <property type="project" value="InterPro"/>
</dbReference>
<dbReference type="FunFam" id="1.10.287.3510:FF:000002">
    <property type="entry name" value="NADH-ubiquinone oxidoreductase chain 4L"/>
    <property type="match status" value="1"/>
</dbReference>
<dbReference type="Gene3D" id="1.10.287.3510">
    <property type="match status" value="1"/>
</dbReference>
<dbReference type="InterPro" id="IPR001133">
    <property type="entry name" value="NADH_UbQ_OxRdtase_chain4L/K"/>
</dbReference>
<dbReference type="InterPro" id="IPR039428">
    <property type="entry name" value="NUOK/Mnh_C1-like"/>
</dbReference>
<dbReference type="PANTHER" id="PTHR11434:SF0">
    <property type="entry name" value="NADH-UBIQUINONE OXIDOREDUCTASE CHAIN 4L"/>
    <property type="match status" value="1"/>
</dbReference>
<dbReference type="PANTHER" id="PTHR11434">
    <property type="entry name" value="NADH-UBIQUINONE OXIDOREDUCTASE SUBUNIT ND4L"/>
    <property type="match status" value="1"/>
</dbReference>
<dbReference type="Pfam" id="PF00420">
    <property type="entry name" value="Oxidored_q2"/>
    <property type="match status" value="1"/>
</dbReference>
<accession>Q15GP7</accession>
<organism>
    <name type="scientific">Presbytis melalophos</name>
    <name type="common">Mitred leaf monkey</name>
    <name type="synonym">Sumatran surili</name>
    <dbReference type="NCBI Taxonomy" id="78451"/>
    <lineage>
        <taxon>Eukaryota</taxon>
        <taxon>Metazoa</taxon>
        <taxon>Chordata</taxon>
        <taxon>Craniata</taxon>
        <taxon>Vertebrata</taxon>
        <taxon>Euteleostomi</taxon>
        <taxon>Mammalia</taxon>
        <taxon>Eutheria</taxon>
        <taxon>Euarchontoglires</taxon>
        <taxon>Primates</taxon>
        <taxon>Haplorrhini</taxon>
        <taxon>Catarrhini</taxon>
        <taxon>Cercopithecidae</taxon>
        <taxon>Colobinae</taxon>
        <taxon>Presbytis</taxon>
    </lineage>
</organism>